<evidence type="ECO:0000255" key="1">
    <source>
        <dbReference type="HAMAP-Rule" id="MF_00294"/>
    </source>
</evidence>
<evidence type="ECO:0000305" key="2"/>
<geneLocation type="chloroplast"/>
<name>RK33_DRANE</name>
<protein>
    <recommendedName>
        <fullName evidence="1">Large ribosomal subunit protein bL33c</fullName>
    </recommendedName>
    <alternativeName>
        <fullName evidence="2">50S ribosomal protein L33, chloroplastic</fullName>
    </alternativeName>
</protein>
<accession>A4QL40</accession>
<comment type="subcellular location">
    <subcellularLocation>
        <location>Plastid</location>
        <location>Chloroplast</location>
    </subcellularLocation>
</comment>
<comment type="similarity">
    <text evidence="1">Belongs to the bacterial ribosomal protein bL33 family.</text>
</comment>
<organism>
    <name type="scientific">Draba nemorosa</name>
    <name type="common">Woodland whitlowgrass</name>
    <dbReference type="NCBI Taxonomy" id="171822"/>
    <lineage>
        <taxon>Eukaryota</taxon>
        <taxon>Viridiplantae</taxon>
        <taxon>Streptophyta</taxon>
        <taxon>Embryophyta</taxon>
        <taxon>Tracheophyta</taxon>
        <taxon>Spermatophyta</taxon>
        <taxon>Magnoliopsida</taxon>
        <taxon>eudicotyledons</taxon>
        <taxon>Gunneridae</taxon>
        <taxon>Pentapetalae</taxon>
        <taxon>rosids</taxon>
        <taxon>malvids</taxon>
        <taxon>Brassicales</taxon>
        <taxon>Brassicaceae</taxon>
        <taxon>Arabideae</taxon>
        <taxon>Draba</taxon>
    </lineage>
</organism>
<feature type="chain" id="PRO_0000356802" description="Large ribosomal subunit protein bL33c">
    <location>
        <begin position="1"/>
        <end position="66"/>
    </location>
</feature>
<keyword id="KW-0150">Chloroplast</keyword>
<keyword id="KW-0934">Plastid</keyword>
<keyword id="KW-0687">Ribonucleoprotein</keyword>
<keyword id="KW-0689">Ribosomal protein</keyword>
<reference key="1">
    <citation type="submission" date="2007-03" db="EMBL/GenBank/DDBJ databases">
        <title>Sequencing analysis of Draba nemoroza chloroplast DNA.</title>
        <authorList>
            <person name="Hosouchi T."/>
            <person name="Tsuruoka H."/>
            <person name="Kotani H."/>
        </authorList>
    </citation>
    <scope>NUCLEOTIDE SEQUENCE [LARGE SCALE GENOMIC DNA]</scope>
</reference>
<proteinExistence type="inferred from homology"/>
<gene>
    <name evidence="1" type="primary">rpl33</name>
</gene>
<dbReference type="EMBL" id="AP009373">
    <property type="protein sequence ID" value="BAF50395.1"/>
    <property type="molecule type" value="Genomic_DNA"/>
</dbReference>
<dbReference type="RefSeq" id="YP_001123571.1">
    <property type="nucleotide sequence ID" value="NC_009272.1"/>
</dbReference>
<dbReference type="GeneID" id="4964773"/>
<dbReference type="GO" id="GO:0009507">
    <property type="term" value="C:chloroplast"/>
    <property type="evidence" value="ECO:0007669"/>
    <property type="project" value="UniProtKB-SubCell"/>
</dbReference>
<dbReference type="GO" id="GO:1990904">
    <property type="term" value="C:ribonucleoprotein complex"/>
    <property type="evidence" value="ECO:0007669"/>
    <property type="project" value="UniProtKB-KW"/>
</dbReference>
<dbReference type="GO" id="GO:0005840">
    <property type="term" value="C:ribosome"/>
    <property type="evidence" value="ECO:0007669"/>
    <property type="project" value="UniProtKB-KW"/>
</dbReference>
<dbReference type="GO" id="GO:0003735">
    <property type="term" value="F:structural constituent of ribosome"/>
    <property type="evidence" value="ECO:0007669"/>
    <property type="project" value="InterPro"/>
</dbReference>
<dbReference type="GO" id="GO:0006412">
    <property type="term" value="P:translation"/>
    <property type="evidence" value="ECO:0007669"/>
    <property type="project" value="UniProtKB-UniRule"/>
</dbReference>
<dbReference type="FunFam" id="2.20.28.120:FF:000004">
    <property type="entry name" value="50S ribosomal protein L33, chloroplastic"/>
    <property type="match status" value="1"/>
</dbReference>
<dbReference type="Gene3D" id="2.20.28.120">
    <property type="entry name" value="Ribosomal protein L33"/>
    <property type="match status" value="1"/>
</dbReference>
<dbReference type="HAMAP" id="MF_00294">
    <property type="entry name" value="Ribosomal_bL33"/>
    <property type="match status" value="1"/>
</dbReference>
<dbReference type="InterPro" id="IPR001705">
    <property type="entry name" value="Ribosomal_bL33"/>
</dbReference>
<dbReference type="InterPro" id="IPR018264">
    <property type="entry name" value="Ribosomal_bL33_CS"/>
</dbReference>
<dbReference type="InterPro" id="IPR038584">
    <property type="entry name" value="Ribosomal_bL33_sf"/>
</dbReference>
<dbReference type="InterPro" id="IPR011332">
    <property type="entry name" value="Ribosomal_zn-bd"/>
</dbReference>
<dbReference type="NCBIfam" id="NF001764">
    <property type="entry name" value="PRK00504.1"/>
    <property type="match status" value="1"/>
</dbReference>
<dbReference type="NCBIfam" id="NF001860">
    <property type="entry name" value="PRK00595.1"/>
    <property type="match status" value="1"/>
</dbReference>
<dbReference type="NCBIfam" id="TIGR01023">
    <property type="entry name" value="rpmG_bact"/>
    <property type="match status" value="1"/>
</dbReference>
<dbReference type="PANTHER" id="PTHR43168">
    <property type="entry name" value="50S RIBOSOMAL PROTEIN L33, CHLOROPLASTIC"/>
    <property type="match status" value="1"/>
</dbReference>
<dbReference type="PANTHER" id="PTHR43168:SF2">
    <property type="entry name" value="LARGE RIBOSOMAL SUBUNIT PROTEIN BL33C"/>
    <property type="match status" value="1"/>
</dbReference>
<dbReference type="Pfam" id="PF00471">
    <property type="entry name" value="Ribosomal_L33"/>
    <property type="match status" value="1"/>
</dbReference>
<dbReference type="SUPFAM" id="SSF57829">
    <property type="entry name" value="Zn-binding ribosomal proteins"/>
    <property type="match status" value="1"/>
</dbReference>
<dbReference type="PROSITE" id="PS00582">
    <property type="entry name" value="RIBOSOMAL_L33"/>
    <property type="match status" value="1"/>
</dbReference>
<sequence>MAKGKDVRVTIILECTSCVRNDIKKESAGISRYITQKNRHNTPSRLELRKFCPYCYKHTIHGEIKK</sequence>